<name>PYRG_CHLPD</name>
<feature type="chain" id="PRO_1000139417" description="CTP synthase">
    <location>
        <begin position="1"/>
        <end position="565"/>
    </location>
</feature>
<feature type="domain" description="Glutamine amidotransferase type-1" evidence="1">
    <location>
        <begin position="299"/>
        <end position="543"/>
    </location>
</feature>
<feature type="region of interest" description="Amidoligase domain" evidence="1">
    <location>
        <begin position="1"/>
        <end position="272"/>
    </location>
</feature>
<feature type="active site" description="Nucleophile; for glutamine hydrolysis" evidence="1">
    <location>
        <position position="390"/>
    </location>
</feature>
<feature type="active site" evidence="1">
    <location>
        <position position="516"/>
    </location>
</feature>
<feature type="active site" evidence="1">
    <location>
        <position position="518"/>
    </location>
</feature>
<feature type="binding site" evidence="1">
    <location>
        <position position="18"/>
    </location>
    <ligand>
        <name>CTP</name>
        <dbReference type="ChEBI" id="CHEBI:37563"/>
        <note>allosteric inhibitor</note>
    </ligand>
</feature>
<feature type="binding site" evidence="1">
    <location>
        <position position="18"/>
    </location>
    <ligand>
        <name>UTP</name>
        <dbReference type="ChEBI" id="CHEBI:46398"/>
    </ligand>
</feature>
<feature type="binding site" evidence="1">
    <location>
        <begin position="19"/>
        <end position="24"/>
    </location>
    <ligand>
        <name>ATP</name>
        <dbReference type="ChEBI" id="CHEBI:30616"/>
    </ligand>
</feature>
<feature type="binding site" evidence="1">
    <location>
        <position position="59"/>
    </location>
    <ligand>
        <name>L-glutamine</name>
        <dbReference type="ChEBI" id="CHEBI:58359"/>
    </ligand>
</feature>
<feature type="binding site" evidence="1">
    <location>
        <position position="76"/>
    </location>
    <ligand>
        <name>ATP</name>
        <dbReference type="ChEBI" id="CHEBI:30616"/>
    </ligand>
</feature>
<feature type="binding site" evidence="1">
    <location>
        <position position="76"/>
    </location>
    <ligand>
        <name>Mg(2+)</name>
        <dbReference type="ChEBI" id="CHEBI:18420"/>
    </ligand>
</feature>
<feature type="binding site" evidence="1">
    <location>
        <position position="146"/>
    </location>
    <ligand>
        <name>Mg(2+)</name>
        <dbReference type="ChEBI" id="CHEBI:18420"/>
    </ligand>
</feature>
<feature type="binding site" evidence="1">
    <location>
        <begin position="153"/>
        <end position="155"/>
    </location>
    <ligand>
        <name>CTP</name>
        <dbReference type="ChEBI" id="CHEBI:37563"/>
        <note>allosteric inhibitor</note>
    </ligand>
</feature>
<feature type="binding site" evidence="1">
    <location>
        <begin position="193"/>
        <end position="198"/>
    </location>
    <ligand>
        <name>CTP</name>
        <dbReference type="ChEBI" id="CHEBI:37563"/>
        <note>allosteric inhibitor</note>
    </ligand>
</feature>
<feature type="binding site" evidence="1">
    <location>
        <begin position="193"/>
        <end position="198"/>
    </location>
    <ligand>
        <name>UTP</name>
        <dbReference type="ChEBI" id="CHEBI:46398"/>
    </ligand>
</feature>
<feature type="binding site" evidence="1">
    <location>
        <position position="229"/>
    </location>
    <ligand>
        <name>CTP</name>
        <dbReference type="ChEBI" id="CHEBI:37563"/>
        <note>allosteric inhibitor</note>
    </ligand>
</feature>
<feature type="binding site" evidence="1">
    <location>
        <position position="229"/>
    </location>
    <ligand>
        <name>UTP</name>
        <dbReference type="ChEBI" id="CHEBI:46398"/>
    </ligand>
</feature>
<feature type="binding site" evidence="1">
    <location>
        <position position="363"/>
    </location>
    <ligand>
        <name>L-glutamine</name>
        <dbReference type="ChEBI" id="CHEBI:58359"/>
    </ligand>
</feature>
<feature type="binding site" evidence="1">
    <location>
        <begin position="391"/>
        <end position="394"/>
    </location>
    <ligand>
        <name>L-glutamine</name>
        <dbReference type="ChEBI" id="CHEBI:58359"/>
    </ligand>
</feature>
<feature type="binding site" evidence="1">
    <location>
        <position position="414"/>
    </location>
    <ligand>
        <name>L-glutamine</name>
        <dbReference type="ChEBI" id="CHEBI:58359"/>
    </ligand>
</feature>
<feature type="binding site" evidence="1">
    <location>
        <position position="471"/>
    </location>
    <ligand>
        <name>L-glutamine</name>
        <dbReference type="ChEBI" id="CHEBI:58359"/>
    </ligand>
</feature>
<comment type="function">
    <text evidence="1">Catalyzes the ATP-dependent amination of UTP to CTP with either L-glutamine or ammonia as the source of nitrogen. Regulates intracellular CTP levels through interactions with the four ribonucleotide triphosphates.</text>
</comment>
<comment type="catalytic activity">
    <reaction evidence="1">
        <text>UTP + L-glutamine + ATP + H2O = CTP + L-glutamate + ADP + phosphate + 2 H(+)</text>
        <dbReference type="Rhea" id="RHEA:26426"/>
        <dbReference type="ChEBI" id="CHEBI:15377"/>
        <dbReference type="ChEBI" id="CHEBI:15378"/>
        <dbReference type="ChEBI" id="CHEBI:29985"/>
        <dbReference type="ChEBI" id="CHEBI:30616"/>
        <dbReference type="ChEBI" id="CHEBI:37563"/>
        <dbReference type="ChEBI" id="CHEBI:43474"/>
        <dbReference type="ChEBI" id="CHEBI:46398"/>
        <dbReference type="ChEBI" id="CHEBI:58359"/>
        <dbReference type="ChEBI" id="CHEBI:456216"/>
        <dbReference type="EC" id="6.3.4.2"/>
    </reaction>
</comment>
<comment type="catalytic activity">
    <reaction evidence="1">
        <text>L-glutamine + H2O = L-glutamate + NH4(+)</text>
        <dbReference type="Rhea" id="RHEA:15889"/>
        <dbReference type="ChEBI" id="CHEBI:15377"/>
        <dbReference type="ChEBI" id="CHEBI:28938"/>
        <dbReference type="ChEBI" id="CHEBI:29985"/>
        <dbReference type="ChEBI" id="CHEBI:58359"/>
    </reaction>
</comment>
<comment type="catalytic activity">
    <reaction evidence="1">
        <text>UTP + NH4(+) + ATP = CTP + ADP + phosphate + 2 H(+)</text>
        <dbReference type="Rhea" id="RHEA:16597"/>
        <dbReference type="ChEBI" id="CHEBI:15378"/>
        <dbReference type="ChEBI" id="CHEBI:28938"/>
        <dbReference type="ChEBI" id="CHEBI:30616"/>
        <dbReference type="ChEBI" id="CHEBI:37563"/>
        <dbReference type="ChEBI" id="CHEBI:43474"/>
        <dbReference type="ChEBI" id="CHEBI:46398"/>
        <dbReference type="ChEBI" id="CHEBI:456216"/>
    </reaction>
</comment>
<comment type="activity regulation">
    <text evidence="1">Allosterically activated by GTP, when glutamine is the substrate; GTP has no effect on the reaction when ammonia is the substrate. The allosteric effector GTP functions by stabilizing the protein conformation that binds the tetrahedral intermediate(s) formed during glutamine hydrolysis. Inhibited by the product CTP, via allosteric rather than competitive inhibition.</text>
</comment>
<comment type="pathway">
    <text evidence="1">Pyrimidine metabolism; CTP biosynthesis via de novo pathway; CTP from UDP: step 2/2.</text>
</comment>
<comment type="subunit">
    <text evidence="1">Homotetramer.</text>
</comment>
<comment type="miscellaneous">
    <text evidence="1">CTPSs have evolved a hybrid strategy for distinguishing between UTP and CTP. The overlapping regions of the product feedback inhibitory and substrate sites recognize a common feature in both compounds, the triphosphate moiety. To differentiate isosteric substrate and product pyrimidine rings, an additional pocket far from the expected kinase/ligase catalytic site, specifically recognizes the cytosine and ribose portions of the product inhibitor.</text>
</comment>
<comment type="similarity">
    <text evidence="1">Belongs to the CTP synthase family.</text>
</comment>
<gene>
    <name evidence="1" type="primary">pyrG</name>
    <name type="ordered locus">Cpha266_2661</name>
</gene>
<organism>
    <name type="scientific">Chlorobium phaeobacteroides (strain DSM 266 / SMG 266 / 2430)</name>
    <dbReference type="NCBI Taxonomy" id="290317"/>
    <lineage>
        <taxon>Bacteria</taxon>
        <taxon>Pseudomonadati</taxon>
        <taxon>Chlorobiota</taxon>
        <taxon>Chlorobiia</taxon>
        <taxon>Chlorobiales</taxon>
        <taxon>Chlorobiaceae</taxon>
        <taxon>Chlorobium/Pelodictyon group</taxon>
        <taxon>Chlorobium</taxon>
    </lineage>
</organism>
<sequence>MARPKNVKHIFVTGGVISSLGKGILSASLGMLLKSRGLKVAIQKYDPYINVDPGTMSPYQHGEVYVTDDGAETDLDLGHYERFLDEATSQASNLTMGRVYKSVIDKERSGEYLGGTVQVVPHVIDEIKDRMAELAKNGNLDVLITEIGGTIGDIESLPFLEAMRQMKLEMGERNLLNIHLTFVPYIKAACELKTKPTQHSVKMLLETGIQPDILVCRSEKPLSREIKNKVGHFCNVNELDVIGLNDCDTIYEVPLMLLKEKLDLRVMKKLGLKKFREPNLEYWRDFCNKVLHPTEGEVTIGVCGKYTEYPDAYKSILEAFIHAGASNNVRVTIKLLRAEDAEAGSFDFKKEMQGVSGVLVAPGFGDRGIEGKISFIRYAREQNIPFFGICLGMQCATIEFARNVCGLHDANSTEFNKRTRFPVIDLMEQQKKVKEKGGTMRLGSYPCIIKEGSKAYDIYKKFLINERHRHRFEFNNTYRSALEEQGMVFSGTSPNGELVEIIELKDHRWFVGVQFHPELKSRVQQVHPLFHGFVAAAKEYEKGSRQMELTVDMPSFMPVENEPAQ</sequence>
<protein>
    <recommendedName>
        <fullName evidence="1">CTP synthase</fullName>
        <ecNumber evidence="1">6.3.4.2</ecNumber>
    </recommendedName>
    <alternativeName>
        <fullName evidence="1">Cytidine 5'-triphosphate synthase</fullName>
    </alternativeName>
    <alternativeName>
        <fullName evidence="1">Cytidine triphosphate synthetase</fullName>
        <shortName evidence="1">CTP synthetase</shortName>
        <shortName evidence="1">CTPS</shortName>
    </alternativeName>
    <alternativeName>
        <fullName evidence="1">UTP--ammonia ligase</fullName>
    </alternativeName>
</protein>
<proteinExistence type="inferred from homology"/>
<keyword id="KW-0067">ATP-binding</keyword>
<keyword id="KW-0315">Glutamine amidotransferase</keyword>
<keyword id="KW-0436">Ligase</keyword>
<keyword id="KW-0460">Magnesium</keyword>
<keyword id="KW-0479">Metal-binding</keyword>
<keyword id="KW-0547">Nucleotide-binding</keyword>
<keyword id="KW-0665">Pyrimidine biosynthesis</keyword>
<keyword id="KW-1185">Reference proteome</keyword>
<accession>A1BJR8</accession>
<evidence type="ECO:0000255" key="1">
    <source>
        <dbReference type="HAMAP-Rule" id="MF_01227"/>
    </source>
</evidence>
<reference key="1">
    <citation type="submission" date="2006-12" db="EMBL/GenBank/DDBJ databases">
        <title>Complete sequence of Chlorobium phaeobacteroides DSM 266.</title>
        <authorList>
            <consortium name="US DOE Joint Genome Institute"/>
            <person name="Copeland A."/>
            <person name="Lucas S."/>
            <person name="Lapidus A."/>
            <person name="Barry K."/>
            <person name="Detter J.C."/>
            <person name="Glavina del Rio T."/>
            <person name="Hammon N."/>
            <person name="Israni S."/>
            <person name="Pitluck S."/>
            <person name="Goltsman E."/>
            <person name="Schmutz J."/>
            <person name="Larimer F."/>
            <person name="Land M."/>
            <person name="Hauser L."/>
            <person name="Mikhailova N."/>
            <person name="Li T."/>
            <person name="Overmann J."/>
            <person name="Bryant D.A."/>
            <person name="Richardson P."/>
        </authorList>
    </citation>
    <scope>NUCLEOTIDE SEQUENCE [LARGE SCALE GENOMIC DNA]</scope>
    <source>
        <strain>DSM 266 / SMG 266 / 2430</strain>
    </source>
</reference>
<dbReference type="EC" id="6.3.4.2" evidence="1"/>
<dbReference type="EMBL" id="CP000492">
    <property type="protein sequence ID" value="ABL66645.1"/>
    <property type="molecule type" value="Genomic_DNA"/>
</dbReference>
<dbReference type="RefSeq" id="WP_015961172.1">
    <property type="nucleotide sequence ID" value="NC_008639.1"/>
</dbReference>
<dbReference type="SMR" id="A1BJR8"/>
<dbReference type="STRING" id="290317.Cpha266_2661"/>
<dbReference type="MEROPS" id="C26.964"/>
<dbReference type="KEGG" id="cph:Cpha266_2661"/>
<dbReference type="eggNOG" id="COG0504">
    <property type="taxonomic scope" value="Bacteria"/>
</dbReference>
<dbReference type="HOGENOM" id="CLU_011675_5_0_10"/>
<dbReference type="OrthoDB" id="9801107at2"/>
<dbReference type="UniPathway" id="UPA00159">
    <property type="reaction ID" value="UER00277"/>
</dbReference>
<dbReference type="Proteomes" id="UP000008701">
    <property type="component" value="Chromosome"/>
</dbReference>
<dbReference type="GO" id="GO:0005829">
    <property type="term" value="C:cytosol"/>
    <property type="evidence" value="ECO:0007669"/>
    <property type="project" value="TreeGrafter"/>
</dbReference>
<dbReference type="GO" id="GO:0005524">
    <property type="term" value="F:ATP binding"/>
    <property type="evidence" value="ECO:0007669"/>
    <property type="project" value="UniProtKB-KW"/>
</dbReference>
<dbReference type="GO" id="GO:0003883">
    <property type="term" value="F:CTP synthase activity"/>
    <property type="evidence" value="ECO:0007669"/>
    <property type="project" value="UniProtKB-UniRule"/>
</dbReference>
<dbReference type="GO" id="GO:0004359">
    <property type="term" value="F:glutaminase activity"/>
    <property type="evidence" value="ECO:0007669"/>
    <property type="project" value="RHEA"/>
</dbReference>
<dbReference type="GO" id="GO:0042802">
    <property type="term" value="F:identical protein binding"/>
    <property type="evidence" value="ECO:0007669"/>
    <property type="project" value="TreeGrafter"/>
</dbReference>
<dbReference type="GO" id="GO:0046872">
    <property type="term" value="F:metal ion binding"/>
    <property type="evidence" value="ECO:0007669"/>
    <property type="project" value="UniProtKB-KW"/>
</dbReference>
<dbReference type="GO" id="GO:0044210">
    <property type="term" value="P:'de novo' CTP biosynthetic process"/>
    <property type="evidence" value="ECO:0007669"/>
    <property type="project" value="UniProtKB-UniRule"/>
</dbReference>
<dbReference type="GO" id="GO:0019856">
    <property type="term" value="P:pyrimidine nucleobase biosynthetic process"/>
    <property type="evidence" value="ECO:0007669"/>
    <property type="project" value="TreeGrafter"/>
</dbReference>
<dbReference type="CDD" id="cd03113">
    <property type="entry name" value="CTPS_N"/>
    <property type="match status" value="1"/>
</dbReference>
<dbReference type="CDD" id="cd01746">
    <property type="entry name" value="GATase1_CTP_Synthase"/>
    <property type="match status" value="1"/>
</dbReference>
<dbReference type="FunFam" id="3.40.50.300:FF:000009">
    <property type="entry name" value="CTP synthase"/>
    <property type="match status" value="1"/>
</dbReference>
<dbReference type="FunFam" id="3.40.50.880:FF:000002">
    <property type="entry name" value="CTP synthase"/>
    <property type="match status" value="1"/>
</dbReference>
<dbReference type="Gene3D" id="3.40.50.880">
    <property type="match status" value="1"/>
</dbReference>
<dbReference type="Gene3D" id="3.40.50.300">
    <property type="entry name" value="P-loop containing nucleotide triphosphate hydrolases"/>
    <property type="match status" value="1"/>
</dbReference>
<dbReference type="HAMAP" id="MF_01227">
    <property type="entry name" value="PyrG"/>
    <property type="match status" value="1"/>
</dbReference>
<dbReference type="InterPro" id="IPR029062">
    <property type="entry name" value="Class_I_gatase-like"/>
</dbReference>
<dbReference type="InterPro" id="IPR004468">
    <property type="entry name" value="CTP_synthase"/>
</dbReference>
<dbReference type="InterPro" id="IPR017456">
    <property type="entry name" value="CTP_synthase_N"/>
</dbReference>
<dbReference type="InterPro" id="IPR017926">
    <property type="entry name" value="GATASE"/>
</dbReference>
<dbReference type="InterPro" id="IPR033828">
    <property type="entry name" value="GATase1_CTP_Synthase"/>
</dbReference>
<dbReference type="InterPro" id="IPR027417">
    <property type="entry name" value="P-loop_NTPase"/>
</dbReference>
<dbReference type="NCBIfam" id="NF003792">
    <property type="entry name" value="PRK05380.1"/>
    <property type="match status" value="1"/>
</dbReference>
<dbReference type="NCBIfam" id="TIGR00337">
    <property type="entry name" value="PyrG"/>
    <property type="match status" value="1"/>
</dbReference>
<dbReference type="PANTHER" id="PTHR11550">
    <property type="entry name" value="CTP SYNTHASE"/>
    <property type="match status" value="1"/>
</dbReference>
<dbReference type="PANTHER" id="PTHR11550:SF0">
    <property type="entry name" value="CTP SYNTHASE-RELATED"/>
    <property type="match status" value="1"/>
</dbReference>
<dbReference type="Pfam" id="PF06418">
    <property type="entry name" value="CTP_synth_N"/>
    <property type="match status" value="1"/>
</dbReference>
<dbReference type="Pfam" id="PF00117">
    <property type="entry name" value="GATase"/>
    <property type="match status" value="1"/>
</dbReference>
<dbReference type="SUPFAM" id="SSF52317">
    <property type="entry name" value="Class I glutamine amidotransferase-like"/>
    <property type="match status" value="1"/>
</dbReference>
<dbReference type="SUPFAM" id="SSF52540">
    <property type="entry name" value="P-loop containing nucleoside triphosphate hydrolases"/>
    <property type="match status" value="1"/>
</dbReference>
<dbReference type="PROSITE" id="PS51273">
    <property type="entry name" value="GATASE_TYPE_1"/>
    <property type="match status" value="1"/>
</dbReference>